<evidence type="ECO:0000255" key="1">
    <source>
        <dbReference type="HAMAP-Rule" id="MF_01147"/>
    </source>
</evidence>
<accession>Q5FGK0</accession>
<keyword id="KW-0997">Cell inner membrane</keyword>
<keyword id="KW-1003">Cell membrane</keyword>
<keyword id="KW-0472">Membrane</keyword>
<keyword id="KW-0808">Transferase</keyword>
<keyword id="KW-0812">Transmembrane</keyword>
<keyword id="KW-1133">Transmembrane helix</keyword>
<feature type="chain" id="PRO_0000172600" description="Phosphatidylglycerol--prolipoprotein diacylglyceryl transferase">
    <location>
        <begin position="1"/>
        <end position="259"/>
    </location>
</feature>
<feature type="transmembrane region" description="Helical" evidence="1">
    <location>
        <begin position="10"/>
        <end position="30"/>
    </location>
</feature>
<feature type="transmembrane region" description="Helical" evidence="1">
    <location>
        <begin position="50"/>
        <end position="70"/>
    </location>
</feature>
<feature type="transmembrane region" description="Helical" evidence="1">
    <location>
        <begin position="86"/>
        <end position="106"/>
    </location>
</feature>
<feature type="transmembrane region" description="Helical" evidence="1">
    <location>
        <begin position="112"/>
        <end position="132"/>
    </location>
</feature>
<feature type="transmembrane region" description="Helical" evidence="1">
    <location>
        <begin position="169"/>
        <end position="189"/>
    </location>
</feature>
<feature type="transmembrane region" description="Helical" evidence="1">
    <location>
        <begin position="197"/>
        <end position="217"/>
    </location>
</feature>
<feature type="transmembrane region" description="Helical" evidence="1">
    <location>
        <begin position="227"/>
        <end position="247"/>
    </location>
</feature>
<feature type="binding site" evidence="1">
    <location>
        <position position="133"/>
    </location>
    <ligand>
        <name>a 1,2-diacyl-sn-glycero-3-phospho-(1'-sn-glycerol)</name>
        <dbReference type="ChEBI" id="CHEBI:64716"/>
    </ligand>
</feature>
<dbReference type="EC" id="2.5.1.145" evidence="1"/>
<dbReference type="EMBL" id="CR925677">
    <property type="protein sequence ID" value="CAI28338.1"/>
    <property type="molecule type" value="Genomic_DNA"/>
</dbReference>
<dbReference type="RefSeq" id="WP_011255935.1">
    <property type="nucleotide sequence ID" value="NC_006831.1"/>
</dbReference>
<dbReference type="SMR" id="Q5FGK0"/>
<dbReference type="KEGG" id="erg:ERGA_CDS_08860"/>
<dbReference type="HOGENOM" id="CLU_013386_1_0_5"/>
<dbReference type="OrthoDB" id="871140at2"/>
<dbReference type="UniPathway" id="UPA00664"/>
<dbReference type="Proteomes" id="UP000000533">
    <property type="component" value="Chromosome"/>
</dbReference>
<dbReference type="GO" id="GO:0005886">
    <property type="term" value="C:plasma membrane"/>
    <property type="evidence" value="ECO:0007669"/>
    <property type="project" value="UniProtKB-SubCell"/>
</dbReference>
<dbReference type="GO" id="GO:0008961">
    <property type="term" value="F:phosphatidylglycerol-prolipoprotein diacylglyceryl transferase activity"/>
    <property type="evidence" value="ECO:0007669"/>
    <property type="project" value="UniProtKB-UniRule"/>
</dbReference>
<dbReference type="GO" id="GO:0042158">
    <property type="term" value="P:lipoprotein biosynthetic process"/>
    <property type="evidence" value="ECO:0007669"/>
    <property type="project" value="UniProtKB-UniRule"/>
</dbReference>
<dbReference type="HAMAP" id="MF_01147">
    <property type="entry name" value="Lgt"/>
    <property type="match status" value="1"/>
</dbReference>
<dbReference type="InterPro" id="IPR001640">
    <property type="entry name" value="Lgt"/>
</dbReference>
<dbReference type="NCBIfam" id="TIGR00544">
    <property type="entry name" value="lgt"/>
    <property type="match status" value="1"/>
</dbReference>
<dbReference type="PANTHER" id="PTHR30589:SF0">
    <property type="entry name" value="PHOSPHATIDYLGLYCEROL--PROLIPOPROTEIN DIACYLGLYCERYL TRANSFERASE"/>
    <property type="match status" value="1"/>
</dbReference>
<dbReference type="PANTHER" id="PTHR30589">
    <property type="entry name" value="PROLIPOPROTEIN DIACYLGLYCERYL TRANSFERASE"/>
    <property type="match status" value="1"/>
</dbReference>
<dbReference type="Pfam" id="PF01790">
    <property type="entry name" value="LGT"/>
    <property type="match status" value="1"/>
</dbReference>
<dbReference type="PROSITE" id="PS01311">
    <property type="entry name" value="LGT"/>
    <property type="match status" value="1"/>
</dbReference>
<sequence length="259" mass="30426">MNIDPVALKIGLLEIRWYSLAYIIGILFAYWYVQKIDKYKVFTPESYKSIISWWVTGMILGGRIGYILFYNLNFYMSFPIEMFKLWKGGMSFHGASLGLFCTMYIFCKKYKIKFLSAIDLCLCAVPVGIFLGRIANFINGELYGKVTNTRFGMIFQNSGDFFYRHPSQLYEAFFEGLLLFVVMNLLFFFTKVKSYQGMLFTIFMIWYGIVRFFIEFVREPDVQVGYILFNWITMGQLLSFIMVILGICILRLSRMSHNI</sequence>
<comment type="function">
    <text evidence="1">Catalyzes the transfer of the diacylglyceryl group from phosphatidylglycerol to the sulfhydryl group of the N-terminal cysteine of a prolipoprotein, the first step in the formation of mature lipoproteins.</text>
</comment>
<comment type="catalytic activity">
    <reaction evidence="1">
        <text>L-cysteinyl-[prolipoprotein] + a 1,2-diacyl-sn-glycero-3-phospho-(1'-sn-glycerol) = an S-1,2-diacyl-sn-glyceryl-L-cysteinyl-[prolipoprotein] + sn-glycerol 1-phosphate + H(+)</text>
        <dbReference type="Rhea" id="RHEA:56712"/>
        <dbReference type="Rhea" id="RHEA-COMP:14679"/>
        <dbReference type="Rhea" id="RHEA-COMP:14680"/>
        <dbReference type="ChEBI" id="CHEBI:15378"/>
        <dbReference type="ChEBI" id="CHEBI:29950"/>
        <dbReference type="ChEBI" id="CHEBI:57685"/>
        <dbReference type="ChEBI" id="CHEBI:64716"/>
        <dbReference type="ChEBI" id="CHEBI:140658"/>
        <dbReference type="EC" id="2.5.1.145"/>
    </reaction>
</comment>
<comment type="pathway">
    <text evidence="1">Protein modification; lipoprotein biosynthesis (diacylglyceryl transfer).</text>
</comment>
<comment type="subcellular location">
    <subcellularLocation>
        <location evidence="1">Cell inner membrane</location>
        <topology evidence="1">Multi-pass membrane protein</topology>
    </subcellularLocation>
</comment>
<comment type="similarity">
    <text evidence="1">Belongs to the Lgt family.</text>
</comment>
<gene>
    <name evidence="1" type="primary">lgt</name>
    <name type="ordered locus">ERGA_CDS_08860</name>
</gene>
<name>LGT_EHRRG</name>
<protein>
    <recommendedName>
        <fullName evidence="1">Phosphatidylglycerol--prolipoprotein diacylglyceryl transferase</fullName>
        <ecNumber evidence="1">2.5.1.145</ecNumber>
    </recommendedName>
</protein>
<reference key="1">
    <citation type="journal article" date="2006" name="J. Bacteriol.">
        <title>Comparative genomic analysis of three strains of Ehrlichia ruminantium reveals an active process of genome size plasticity.</title>
        <authorList>
            <person name="Frutos R."/>
            <person name="Viari A."/>
            <person name="Ferraz C."/>
            <person name="Morgat A."/>
            <person name="Eychenie S."/>
            <person name="Kandassamy Y."/>
            <person name="Chantal I."/>
            <person name="Bensaid A."/>
            <person name="Coissac E."/>
            <person name="Vachiery N."/>
            <person name="Demaille J."/>
            <person name="Martinez D."/>
        </authorList>
    </citation>
    <scope>NUCLEOTIDE SEQUENCE [LARGE SCALE GENOMIC DNA]</scope>
    <source>
        <strain>Gardel</strain>
    </source>
</reference>
<organism>
    <name type="scientific">Ehrlichia ruminantium (strain Gardel)</name>
    <dbReference type="NCBI Taxonomy" id="302409"/>
    <lineage>
        <taxon>Bacteria</taxon>
        <taxon>Pseudomonadati</taxon>
        <taxon>Pseudomonadota</taxon>
        <taxon>Alphaproteobacteria</taxon>
        <taxon>Rickettsiales</taxon>
        <taxon>Anaplasmataceae</taxon>
        <taxon>Ehrlichia</taxon>
    </lineage>
</organism>
<proteinExistence type="inferred from homology"/>